<dbReference type="EC" id="2.7.11.33" evidence="1"/>
<dbReference type="EC" id="2.7.4.28" evidence="1"/>
<dbReference type="EMBL" id="CP000010">
    <property type="protein sequence ID" value="AAU47739.1"/>
    <property type="molecule type" value="Genomic_DNA"/>
</dbReference>
<dbReference type="RefSeq" id="WP_004192738.1">
    <property type="nucleotide sequence ID" value="NC_006348.1"/>
</dbReference>
<dbReference type="RefSeq" id="YP_103179.1">
    <property type="nucleotide sequence ID" value="NC_006348.1"/>
</dbReference>
<dbReference type="SMR" id="Q62JE0"/>
<dbReference type="KEGG" id="bma:BMA1539"/>
<dbReference type="PATRIC" id="fig|243160.12.peg.1583"/>
<dbReference type="eggNOG" id="COG1806">
    <property type="taxonomic scope" value="Bacteria"/>
</dbReference>
<dbReference type="HOGENOM" id="CLU_046206_1_0_4"/>
<dbReference type="Proteomes" id="UP000006693">
    <property type="component" value="Chromosome 1"/>
</dbReference>
<dbReference type="GO" id="GO:0043531">
    <property type="term" value="F:ADP binding"/>
    <property type="evidence" value="ECO:0007669"/>
    <property type="project" value="UniProtKB-UniRule"/>
</dbReference>
<dbReference type="GO" id="GO:0005524">
    <property type="term" value="F:ATP binding"/>
    <property type="evidence" value="ECO:0007669"/>
    <property type="project" value="InterPro"/>
</dbReference>
<dbReference type="GO" id="GO:0016776">
    <property type="term" value="F:phosphotransferase activity, phosphate group as acceptor"/>
    <property type="evidence" value="ECO:0007669"/>
    <property type="project" value="UniProtKB-UniRule"/>
</dbReference>
<dbReference type="GO" id="GO:0004674">
    <property type="term" value="F:protein serine/threonine kinase activity"/>
    <property type="evidence" value="ECO:0007669"/>
    <property type="project" value="UniProtKB-UniRule"/>
</dbReference>
<dbReference type="HAMAP" id="MF_01062">
    <property type="entry name" value="PSRP"/>
    <property type="match status" value="1"/>
</dbReference>
<dbReference type="InterPro" id="IPR005177">
    <property type="entry name" value="Kinase-pyrophosphorylase"/>
</dbReference>
<dbReference type="InterPro" id="IPR026530">
    <property type="entry name" value="PSRP"/>
</dbReference>
<dbReference type="NCBIfam" id="NF003742">
    <property type="entry name" value="PRK05339.1"/>
    <property type="match status" value="1"/>
</dbReference>
<dbReference type="PANTHER" id="PTHR31756">
    <property type="entry name" value="PYRUVATE, PHOSPHATE DIKINASE REGULATORY PROTEIN 1, CHLOROPLASTIC"/>
    <property type="match status" value="1"/>
</dbReference>
<dbReference type="PANTHER" id="PTHR31756:SF3">
    <property type="entry name" value="PYRUVATE, PHOSPHATE DIKINASE REGULATORY PROTEIN 1, CHLOROPLASTIC"/>
    <property type="match status" value="1"/>
</dbReference>
<dbReference type="Pfam" id="PF03618">
    <property type="entry name" value="Kinase-PPPase"/>
    <property type="match status" value="1"/>
</dbReference>
<name>PSRP_BURMA</name>
<proteinExistence type="inferred from homology"/>
<evidence type="ECO:0000255" key="1">
    <source>
        <dbReference type="HAMAP-Rule" id="MF_01062"/>
    </source>
</evidence>
<protein>
    <recommendedName>
        <fullName evidence="1">Putative phosphoenolpyruvate synthase regulatory protein</fullName>
        <shortName evidence="1">PEP synthase regulatory protein</shortName>
        <shortName evidence="1">PSRP</shortName>
        <ecNumber evidence="1">2.7.11.33</ecNumber>
        <ecNumber evidence="1">2.7.4.28</ecNumber>
    </recommendedName>
    <alternativeName>
        <fullName evidence="1">Pyruvate, water dikinase regulatory protein</fullName>
    </alternativeName>
</protein>
<sequence>MLPTVFIVSDGTGITAETFAHSILSQFDQKFRLVRVPFIDSIEKAYDTVRKINDAAQHDGRRPIVFTTLVDGESNEIVKRSNALVLDMFQRFVEPLEQELQLKSSHAMGRVHQNADTEEYKTRIEAINFSLAHDDGQSNRNLADADVILIGVSRSGKTPTSLYLAMQYGVKAANYPLIPEDFERGKLPTPLHPHRDKLFGLSIDPMRLSEIRNERRPGSKYAAPENCRYEINEAEAMMRREGVKWLSSTHKSIEEIATTILQEIKLERQSY</sequence>
<accession>Q62JE0</accession>
<reference key="1">
    <citation type="journal article" date="2004" name="Proc. Natl. Acad. Sci. U.S.A.">
        <title>Structural flexibility in the Burkholderia mallei genome.</title>
        <authorList>
            <person name="Nierman W.C."/>
            <person name="DeShazer D."/>
            <person name="Kim H.S."/>
            <person name="Tettelin H."/>
            <person name="Nelson K.E."/>
            <person name="Feldblyum T.V."/>
            <person name="Ulrich R.L."/>
            <person name="Ronning C.M."/>
            <person name="Brinkac L.M."/>
            <person name="Daugherty S.C."/>
            <person name="Davidsen T.D."/>
            <person name="DeBoy R.T."/>
            <person name="Dimitrov G."/>
            <person name="Dodson R.J."/>
            <person name="Durkin A.S."/>
            <person name="Gwinn M.L."/>
            <person name="Haft D.H."/>
            <person name="Khouri H.M."/>
            <person name="Kolonay J.F."/>
            <person name="Madupu R."/>
            <person name="Mohammoud Y."/>
            <person name="Nelson W.C."/>
            <person name="Radune D."/>
            <person name="Romero C.M."/>
            <person name="Sarria S."/>
            <person name="Selengut J."/>
            <person name="Shamblin C."/>
            <person name="Sullivan S.A."/>
            <person name="White O."/>
            <person name="Yu Y."/>
            <person name="Zafar N."/>
            <person name="Zhou L."/>
            <person name="Fraser C.M."/>
        </authorList>
    </citation>
    <scope>NUCLEOTIDE SEQUENCE [LARGE SCALE GENOMIC DNA]</scope>
    <source>
        <strain>ATCC 23344</strain>
    </source>
</reference>
<feature type="chain" id="PRO_0000196641" description="Putative phosphoenolpyruvate synthase regulatory protein">
    <location>
        <begin position="1"/>
        <end position="271"/>
    </location>
</feature>
<feature type="binding site" evidence="1">
    <location>
        <begin position="151"/>
        <end position="158"/>
    </location>
    <ligand>
        <name>ADP</name>
        <dbReference type="ChEBI" id="CHEBI:456216"/>
    </ligand>
</feature>
<organism>
    <name type="scientific">Burkholderia mallei (strain ATCC 23344)</name>
    <dbReference type="NCBI Taxonomy" id="243160"/>
    <lineage>
        <taxon>Bacteria</taxon>
        <taxon>Pseudomonadati</taxon>
        <taxon>Pseudomonadota</taxon>
        <taxon>Betaproteobacteria</taxon>
        <taxon>Burkholderiales</taxon>
        <taxon>Burkholderiaceae</taxon>
        <taxon>Burkholderia</taxon>
        <taxon>pseudomallei group</taxon>
    </lineage>
</organism>
<gene>
    <name type="ordered locus">BMA1539</name>
</gene>
<keyword id="KW-0418">Kinase</keyword>
<keyword id="KW-0547">Nucleotide-binding</keyword>
<keyword id="KW-1185">Reference proteome</keyword>
<keyword id="KW-0723">Serine/threonine-protein kinase</keyword>
<keyword id="KW-0808">Transferase</keyword>
<comment type="function">
    <text evidence="1">Bifunctional serine/threonine kinase and phosphorylase involved in the regulation of the phosphoenolpyruvate synthase (PEPS) by catalyzing its phosphorylation/dephosphorylation.</text>
</comment>
<comment type="catalytic activity">
    <reaction evidence="1">
        <text>[pyruvate, water dikinase] + ADP = [pyruvate, water dikinase]-phosphate + AMP + H(+)</text>
        <dbReference type="Rhea" id="RHEA:46020"/>
        <dbReference type="Rhea" id="RHEA-COMP:11425"/>
        <dbReference type="Rhea" id="RHEA-COMP:11426"/>
        <dbReference type="ChEBI" id="CHEBI:15378"/>
        <dbReference type="ChEBI" id="CHEBI:43176"/>
        <dbReference type="ChEBI" id="CHEBI:68546"/>
        <dbReference type="ChEBI" id="CHEBI:456215"/>
        <dbReference type="ChEBI" id="CHEBI:456216"/>
        <dbReference type="EC" id="2.7.11.33"/>
    </reaction>
</comment>
<comment type="catalytic activity">
    <reaction evidence="1">
        <text>[pyruvate, water dikinase]-phosphate + phosphate + H(+) = [pyruvate, water dikinase] + diphosphate</text>
        <dbReference type="Rhea" id="RHEA:48580"/>
        <dbReference type="Rhea" id="RHEA-COMP:11425"/>
        <dbReference type="Rhea" id="RHEA-COMP:11426"/>
        <dbReference type="ChEBI" id="CHEBI:15378"/>
        <dbReference type="ChEBI" id="CHEBI:33019"/>
        <dbReference type="ChEBI" id="CHEBI:43176"/>
        <dbReference type="ChEBI" id="CHEBI:43474"/>
        <dbReference type="ChEBI" id="CHEBI:68546"/>
        <dbReference type="EC" id="2.7.4.28"/>
    </reaction>
</comment>
<comment type="similarity">
    <text evidence="1">Belongs to the pyruvate, phosphate/water dikinase regulatory protein family. PSRP subfamily.</text>
</comment>